<name>SYC_NEIMA</name>
<evidence type="ECO:0000250" key="1"/>
<evidence type="ECO:0000305" key="2"/>
<gene>
    <name type="primary">cysS</name>
    <name type="ordered locus">NMA0347</name>
</gene>
<reference key="1">
    <citation type="journal article" date="2000" name="Nature">
        <title>Complete DNA sequence of a serogroup A strain of Neisseria meningitidis Z2491.</title>
        <authorList>
            <person name="Parkhill J."/>
            <person name="Achtman M."/>
            <person name="James K.D."/>
            <person name="Bentley S.D."/>
            <person name="Churcher C.M."/>
            <person name="Klee S.R."/>
            <person name="Morelli G."/>
            <person name="Basham D."/>
            <person name="Brown D."/>
            <person name="Chillingworth T."/>
            <person name="Davies R.M."/>
            <person name="Davis P."/>
            <person name="Devlin K."/>
            <person name="Feltwell T."/>
            <person name="Hamlin N."/>
            <person name="Holroyd S."/>
            <person name="Jagels K."/>
            <person name="Leather S."/>
            <person name="Moule S."/>
            <person name="Mungall K.L."/>
            <person name="Quail M.A."/>
            <person name="Rajandream M.A."/>
            <person name="Rutherford K.M."/>
            <person name="Simmonds M."/>
            <person name="Skelton J."/>
            <person name="Whitehead S."/>
            <person name="Spratt B.G."/>
            <person name="Barrell B.G."/>
        </authorList>
    </citation>
    <scope>NUCLEOTIDE SEQUENCE [LARGE SCALE GENOMIC DNA]</scope>
    <source>
        <strain>DSM 15465 / Z2491</strain>
    </source>
</reference>
<organism>
    <name type="scientific">Neisseria meningitidis serogroup A / serotype 4A (strain DSM 15465 / Z2491)</name>
    <dbReference type="NCBI Taxonomy" id="122587"/>
    <lineage>
        <taxon>Bacteria</taxon>
        <taxon>Pseudomonadati</taxon>
        <taxon>Pseudomonadota</taxon>
        <taxon>Betaproteobacteria</taxon>
        <taxon>Neisseriales</taxon>
        <taxon>Neisseriaceae</taxon>
        <taxon>Neisseria</taxon>
    </lineage>
</organism>
<proteinExistence type="inferred from homology"/>
<protein>
    <recommendedName>
        <fullName>Cysteine--tRNA ligase</fullName>
        <ecNumber>6.1.1.16</ecNumber>
    </recommendedName>
    <alternativeName>
        <fullName>Cysteinyl-tRNA synthetase</fullName>
        <shortName>CysRS</shortName>
    </alternativeName>
</protein>
<dbReference type="EC" id="6.1.1.16"/>
<dbReference type="EMBL" id="AL157959">
    <property type="protein sequence ID" value="CAM07647.1"/>
    <property type="molecule type" value="Genomic_DNA"/>
</dbReference>
<dbReference type="PIR" id="H82030">
    <property type="entry name" value="H82030"/>
</dbReference>
<dbReference type="SMR" id="Q9JWJ3"/>
<dbReference type="EnsemblBacteria" id="CAM07647">
    <property type="protein sequence ID" value="CAM07647"/>
    <property type="gene ID" value="NMA0347"/>
</dbReference>
<dbReference type="KEGG" id="nma:NMA0347"/>
<dbReference type="HOGENOM" id="CLU_013528_6_0_4"/>
<dbReference type="Proteomes" id="UP000000626">
    <property type="component" value="Chromosome"/>
</dbReference>
<dbReference type="GO" id="GO:0005829">
    <property type="term" value="C:cytosol"/>
    <property type="evidence" value="ECO:0007669"/>
    <property type="project" value="TreeGrafter"/>
</dbReference>
<dbReference type="GO" id="GO:0005524">
    <property type="term" value="F:ATP binding"/>
    <property type="evidence" value="ECO:0007669"/>
    <property type="project" value="UniProtKB-UniRule"/>
</dbReference>
<dbReference type="GO" id="GO:0004817">
    <property type="term" value="F:cysteine-tRNA ligase activity"/>
    <property type="evidence" value="ECO:0007669"/>
    <property type="project" value="UniProtKB-UniRule"/>
</dbReference>
<dbReference type="GO" id="GO:0008270">
    <property type="term" value="F:zinc ion binding"/>
    <property type="evidence" value="ECO:0007669"/>
    <property type="project" value="UniProtKB-UniRule"/>
</dbReference>
<dbReference type="GO" id="GO:0006423">
    <property type="term" value="P:cysteinyl-tRNA aminoacylation"/>
    <property type="evidence" value="ECO:0007669"/>
    <property type="project" value="UniProtKB-UniRule"/>
</dbReference>
<dbReference type="CDD" id="cd07963">
    <property type="entry name" value="Anticodon_Ia_Cys"/>
    <property type="match status" value="1"/>
</dbReference>
<dbReference type="CDD" id="cd00672">
    <property type="entry name" value="CysRS_core"/>
    <property type="match status" value="1"/>
</dbReference>
<dbReference type="FunFam" id="3.40.50.620:FF:000009">
    <property type="entry name" value="Cysteine--tRNA ligase"/>
    <property type="match status" value="1"/>
</dbReference>
<dbReference type="Gene3D" id="1.20.120.1910">
    <property type="entry name" value="Cysteine-tRNA ligase, C-terminal anti-codon recognition domain"/>
    <property type="match status" value="1"/>
</dbReference>
<dbReference type="Gene3D" id="3.40.50.620">
    <property type="entry name" value="HUPs"/>
    <property type="match status" value="1"/>
</dbReference>
<dbReference type="HAMAP" id="MF_00041">
    <property type="entry name" value="Cys_tRNA_synth"/>
    <property type="match status" value="1"/>
</dbReference>
<dbReference type="InterPro" id="IPR015803">
    <property type="entry name" value="Cys-tRNA-ligase"/>
</dbReference>
<dbReference type="InterPro" id="IPR015273">
    <property type="entry name" value="Cys-tRNA-synt_Ia_DALR"/>
</dbReference>
<dbReference type="InterPro" id="IPR024909">
    <property type="entry name" value="Cys-tRNA/MSH_ligase"/>
</dbReference>
<dbReference type="InterPro" id="IPR056411">
    <property type="entry name" value="CysS_C"/>
</dbReference>
<dbReference type="InterPro" id="IPR014729">
    <property type="entry name" value="Rossmann-like_a/b/a_fold"/>
</dbReference>
<dbReference type="InterPro" id="IPR032678">
    <property type="entry name" value="tRNA-synt_1_cat_dom"/>
</dbReference>
<dbReference type="InterPro" id="IPR009080">
    <property type="entry name" value="tRNAsynth_Ia_anticodon-bd"/>
</dbReference>
<dbReference type="NCBIfam" id="TIGR00435">
    <property type="entry name" value="cysS"/>
    <property type="match status" value="1"/>
</dbReference>
<dbReference type="PANTHER" id="PTHR10890:SF3">
    <property type="entry name" value="CYSTEINE--TRNA LIGASE, CYTOPLASMIC"/>
    <property type="match status" value="1"/>
</dbReference>
<dbReference type="PANTHER" id="PTHR10890">
    <property type="entry name" value="CYSTEINYL-TRNA SYNTHETASE"/>
    <property type="match status" value="1"/>
</dbReference>
<dbReference type="Pfam" id="PF23493">
    <property type="entry name" value="CysS_C"/>
    <property type="match status" value="1"/>
</dbReference>
<dbReference type="Pfam" id="PF09190">
    <property type="entry name" value="DALR_2"/>
    <property type="match status" value="1"/>
</dbReference>
<dbReference type="Pfam" id="PF01406">
    <property type="entry name" value="tRNA-synt_1e"/>
    <property type="match status" value="1"/>
</dbReference>
<dbReference type="PRINTS" id="PR00983">
    <property type="entry name" value="TRNASYNTHCYS"/>
</dbReference>
<dbReference type="SMART" id="SM00840">
    <property type="entry name" value="DALR_2"/>
    <property type="match status" value="1"/>
</dbReference>
<dbReference type="SUPFAM" id="SSF47323">
    <property type="entry name" value="Anticodon-binding domain of a subclass of class I aminoacyl-tRNA synthetases"/>
    <property type="match status" value="1"/>
</dbReference>
<dbReference type="SUPFAM" id="SSF52374">
    <property type="entry name" value="Nucleotidylyl transferase"/>
    <property type="match status" value="1"/>
</dbReference>
<comment type="catalytic activity">
    <reaction>
        <text>tRNA(Cys) + L-cysteine + ATP = L-cysteinyl-tRNA(Cys) + AMP + diphosphate</text>
        <dbReference type="Rhea" id="RHEA:17773"/>
        <dbReference type="Rhea" id="RHEA-COMP:9661"/>
        <dbReference type="Rhea" id="RHEA-COMP:9679"/>
        <dbReference type="ChEBI" id="CHEBI:30616"/>
        <dbReference type="ChEBI" id="CHEBI:33019"/>
        <dbReference type="ChEBI" id="CHEBI:35235"/>
        <dbReference type="ChEBI" id="CHEBI:78442"/>
        <dbReference type="ChEBI" id="CHEBI:78517"/>
        <dbReference type="ChEBI" id="CHEBI:456215"/>
        <dbReference type="EC" id="6.1.1.16"/>
    </reaction>
</comment>
<comment type="cofactor">
    <cofactor evidence="1">
        <name>Zn(2+)</name>
        <dbReference type="ChEBI" id="CHEBI:29105"/>
    </cofactor>
    <text evidence="1">Binds 1 zinc ion per subunit.</text>
</comment>
<comment type="subunit">
    <text evidence="1">Monomer.</text>
</comment>
<comment type="subcellular location">
    <subcellularLocation>
        <location evidence="1">Cytoplasm</location>
    </subcellularLocation>
</comment>
<comment type="similarity">
    <text evidence="2">Belongs to the class-I aminoacyl-tRNA synthetase family.</text>
</comment>
<feature type="chain" id="PRO_0000159443" description="Cysteine--tRNA ligase">
    <location>
        <begin position="1"/>
        <end position="699"/>
    </location>
</feature>
<feature type="region of interest" description="Unknown">
    <location>
        <begin position="1"/>
        <end position="226"/>
    </location>
</feature>
<feature type="short sequence motif" description="'HIGH' region">
    <location>
        <begin position="256"/>
        <end position="266"/>
    </location>
</feature>
<feature type="short sequence motif" description="'KMSKS' region">
    <location>
        <begin position="508"/>
        <end position="512"/>
    </location>
</feature>
<feature type="binding site" evidence="1">
    <location>
        <position position="254"/>
    </location>
    <ligand>
        <name>Zn(2+)</name>
        <dbReference type="ChEBI" id="CHEBI:29105"/>
    </ligand>
</feature>
<feature type="binding site" evidence="1">
    <location>
        <position position="435"/>
    </location>
    <ligand>
        <name>Zn(2+)</name>
        <dbReference type="ChEBI" id="CHEBI:29105"/>
    </ligand>
</feature>
<feature type="binding site" evidence="1">
    <location>
        <position position="460"/>
    </location>
    <ligand>
        <name>Zn(2+)</name>
        <dbReference type="ChEBI" id="CHEBI:29105"/>
    </ligand>
</feature>
<feature type="binding site" evidence="1">
    <location>
        <position position="464"/>
    </location>
    <ligand>
        <name>Zn(2+)</name>
        <dbReference type="ChEBI" id="CHEBI:29105"/>
    </ligand>
</feature>
<feature type="binding site" evidence="1">
    <location>
        <position position="511"/>
    </location>
    <ligand>
        <name>ATP</name>
        <dbReference type="ChEBI" id="CHEBI:30616"/>
    </ligand>
</feature>
<sequence length="699" mass="78973">MTTITEKRLTFAFPEDYYVTKYDEWEHYKIFQNSCNLRNKIDTNEKGKNGINQSVDDDNGSSGVDIIALHESTLWLIEIKDYYRLGLEPNAQSIDEKLSDLPYLIARKIRDSLAGLVSAKFKAEKQEEKDFSRLALDCNEIKIVLHIEMPSIRSKLYPSSSDLANLLKDKFKLSEFTKNFANCYAEPIFTNISHINNPQLRNVPWSVSTGTEQKLSSEQQRLIHNPMTTIYNTLTRQKEPFAPIDPKNVRMYVCGMTVYDYCHLGHARVMVVFDMIARWLRECGYPLTYVRNITDIDDKIIARAAENGETIGELTARFIQAMHEDADALGVLRPDIEPKATENIPQMIAMIETLIQNGKAYPAANGDVYYAVREFSAYGQLSGKSLDDLRAGERVEVDGFKRDPLDFVLWKAAKAGEPAWESPWGNGRPGWHIECSAMSENLFGNTFDIHGGGADLQFPHHENEIAQSVGATGHTCGHHHAQTHHGQSIASHVKYWLHNGFIRVDGEKMSKSLGNFFTIREVLKQYDPEVVRFFILRAHYRSPLNYSDAHLDDAKGALTRLYTTLKNTPAAEFDLSENVNDYTRRFYAAMNDDFGTVEAVAVLFELAGEVNKTNDAQLAGCLKALGGIIGLLQRDPTEFLQGGAASDGLSNEEIEDLIARRKQARADKNWAESDRIRDLLNEHKIILEDNAGGTTWRRG</sequence>
<accession>Q9JWJ3</accession>
<accession>A1IPH8</accession>
<keyword id="KW-0030">Aminoacyl-tRNA synthetase</keyword>
<keyword id="KW-0067">ATP-binding</keyword>
<keyword id="KW-0963">Cytoplasm</keyword>
<keyword id="KW-0436">Ligase</keyword>
<keyword id="KW-0479">Metal-binding</keyword>
<keyword id="KW-0547">Nucleotide-binding</keyword>
<keyword id="KW-0648">Protein biosynthesis</keyword>
<keyword id="KW-0862">Zinc</keyword>